<feature type="chain" id="PRO_0000342896" description="Lysine-specific histone demethylase 1 homolog 1">
    <location>
        <begin position="1"/>
        <end position="849"/>
    </location>
</feature>
<feature type="domain" description="SWIRM" evidence="2">
    <location>
        <begin position="159"/>
        <end position="260"/>
    </location>
</feature>
<feature type="region of interest" description="Disordered" evidence="3">
    <location>
        <begin position="1"/>
        <end position="118"/>
    </location>
</feature>
<feature type="compositionally biased region" description="Low complexity" evidence="3">
    <location>
        <begin position="34"/>
        <end position="67"/>
    </location>
</feature>
<feature type="compositionally biased region" description="Low complexity" evidence="3">
    <location>
        <begin position="89"/>
        <end position="103"/>
    </location>
</feature>
<feature type="compositionally biased region" description="Basic residues" evidence="3">
    <location>
        <begin position="106"/>
        <end position="115"/>
    </location>
</feature>
<feature type="binding site" evidence="1">
    <location>
        <position position="300"/>
    </location>
    <ligand>
        <name>FAD</name>
        <dbReference type="ChEBI" id="CHEBI:57692"/>
    </ligand>
</feature>
<feature type="binding site" evidence="1">
    <location>
        <position position="302"/>
    </location>
    <ligand>
        <name>FAD</name>
        <dbReference type="ChEBI" id="CHEBI:57692"/>
    </ligand>
</feature>
<feature type="binding site" evidence="1">
    <location>
        <position position="308"/>
    </location>
    <ligand>
        <name>FAD</name>
        <dbReference type="ChEBI" id="CHEBI:57692"/>
    </ligand>
</feature>
<feature type="binding site" evidence="1">
    <location>
        <position position="688"/>
    </location>
    <ligand>
        <name>FAD</name>
        <dbReference type="ChEBI" id="CHEBI:57692"/>
    </ligand>
</feature>
<feature type="sequence conflict" description="In Ref. 4; AK070699." evidence="4" ref="4">
    <original>P</original>
    <variation>H</variation>
    <location>
        <position position="322"/>
    </location>
</feature>
<organism>
    <name type="scientific">Oryza sativa subsp. japonica</name>
    <name type="common">Rice</name>
    <dbReference type="NCBI Taxonomy" id="39947"/>
    <lineage>
        <taxon>Eukaryota</taxon>
        <taxon>Viridiplantae</taxon>
        <taxon>Streptophyta</taxon>
        <taxon>Embryophyta</taxon>
        <taxon>Tracheophyta</taxon>
        <taxon>Spermatophyta</taxon>
        <taxon>Magnoliopsida</taxon>
        <taxon>Liliopsida</taxon>
        <taxon>Poales</taxon>
        <taxon>Poaceae</taxon>
        <taxon>BOP clade</taxon>
        <taxon>Oryzoideae</taxon>
        <taxon>Oryzeae</taxon>
        <taxon>Oryzinae</taxon>
        <taxon>Oryza</taxon>
        <taxon>Oryza sativa</taxon>
    </lineage>
</organism>
<name>LDL1_ORYSJ</name>
<dbReference type="EC" id="1.-.-.-"/>
<dbReference type="EMBL" id="AP005012">
    <property type="protein sequence ID" value="BAD17247.1"/>
    <property type="molecule type" value="Genomic_DNA"/>
</dbReference>
<dbReference type="EMBL" id="AP008208">
    <property type="protein sequence ID" value="BAF10075.1"/>
    <property type="molecule type" value="Genomic_DNA"/>
</dbReference>
<dbReference type="EMBL" id="AP014958">
    <property type="protein sequence ID" value="BAS80985.1"/>
    <property type="molecule type" value="Genomic_DNA"/>
</dbReference>
<dbReference type="EMBL" id="AK070699">
    <property type="status" value="NOT_ANNOTATED_CDS"/>
    <property type="molecule type" value="mRNA"/>
</dbReference>
<dbReference type="RefSeq" id="XP_015623199.1">
    <property type="nucleotide sequence ID" value="XM_015767713.1"/>
</dbReference>
<dbReference type="SMR" id="Q6Z690"/>
<dbReference type="FunCoup" id="Q6Z690">
    <property type="interactions" value="2476"/>
</dbReference>
<dbReference type="STRING" id="39947.Q6Z690"/>
<dbReference type="PaxDb" id="39947-Q6Z690"/>
<dbReference type="EnsemblPlants" id="Os02t0755200-01">
    <property type="protein sequence ID" value="Os02t0755200-01"/>
    <property type="gene ID" value="Os02g0755200"/>
</dbReference>
<dbReference type="Gramene" id="Os02t0755200-01">
    <property type="protein sequence ID" value="Os02t0755200-01"/>
    <property type="gene ID" value="Os02g0755200"/>
</dbReference>
<dbReference type="KEGG" id="dosa:Os02g0755200"/>
<dbReference type="eggNOG" id="KOG0029">
    <property type="taxonomic scope" value="Eukaryota"/>
</dbReference>
<dbReference type="HOGENOM" id="CLU_004498_5_0_1"/>
<dbReference type="InParanoid" id="Q6Z690"/>
<dbReference type="OMA" id="SSRGEMF"/>
<dbReference type="OrthoDB" id="2219495at2759"/>
<dbReference type="Proteomes" id="UP000000763">
    <property type="component" value="Chromosome 2"/>
</dbReference>
<dbReference type="Proteomes" id="UP000059680">
    <property type="component" value="Chromosome 2"/>
</dbReference>
<dbReference type="GO" id="GO:0005737">
    <property type="term" value="C:cytoplasm"/>
    <property type="evidence" value="ECO:0007669"/>
    <property type="project" value="EnsemblPlants"/>
</dbReference>
<dbReference type="GO" id="GO:0005634">
    <property type="term" value="C:nucleus"/>
    <property type="evidence" value="ECO:0000318"/>
    <property type="project" value="GO_Central"/>
</dbReference>
<dbReference type="GO" id="GO:0050660">
    <property type="term" value="F:flavin adenine dinucleotide binding"/>
    <property type="evidence" value="ECO:0007669"/>
    <property type="project" value="UniProtKB-ARBA"/>
</dbReference>
<dbReference type="GO" id="GO:0016491">
    <property type="term" value="F:oxidoreductase activity"/>
    <property type="evidence" value="ECO:0000318"/>
    <property type="project" value="GO_Central"/>
</dbReference>
<dbReference type="GO" id="GO:0052901">
    <property type="term" value="F:spermine oxidase activity"/>
    <property type="evidence" value="ECO:0007669"/>
    <property type="project" value="UniProtKB-ARBA"/>
</dbReference>
<dbReference type="GO" id="GO:0006325">
    <property type="term" value="P:chromatin organization"/>
    <property type="evidence" value="ECO:0007669"/>
    <property type="project" value="UniProtKB-KW"/>
</dbReference>
<dbReference type="GO" id="GO:0045892">
    <property type="term" value="P:negative regulation of DNA-templated transcription"/>
    <property type="evidence" value="ECO:0000318"/>
    <property type="project" value="GO_Central"/>
</dbReference>
<dbReference type="GO" id="GO:0048364">
    <property type="term" value="P:root development"/>
    <property type="evidence" value="ECO:0007669"/>
    <property type="project" value="EnsemblPlants"/>
</dbReference>
<dbReference type="GO" id="GO:0046208">
    <property type="term" value="P:spermine catabolic process"/>
    <property type="evidence" value="ECO:0007669"/>
    <property type="project" value="UniProtKB-ARBA"/>
</dbReference>
<dbReference type="GO" id="GO:1903602">
    <property type="term" value="P:thermospermine catabolic process"/>
    <property type="evidence" value="ECO:0007669"/>
    <property type="project" value="UniProtKB-ARBA"/>
</dbReference>
<dbReference type="FunFam" id="1.10.10.10:FF:000064">
    <property type="entry name" value="Lysine-specific histone demethylase 1A"/>
    <property type="match status" value="1"/>
</dbReference>
<dbReference type="Gene3D" id="3.90.660.10">
    <property type="match status" value="1"/>
</dbReference>
<dbReference type="Gene3D" id="3.50.50.60">
    <property type="entry name" value="FAD/NAD(P)-binding domain"/>
    <property type="match status" value="1"/>
</dbReference>
<dbReference type="Gene3D" id="1.10.10.10">
    <property type="entry name" value="Winged helix-like DNA-binding domain superfamily/Winged helix DNA-binding domain"/>
    <property type="match status" value="1"/>
</dbReference>
<dbReference type="InterPro" id="IPR002937">
    <property type="entry name" value="Amino_oxidase"/>
</dbReference>
<dbReference type="InterPro" id="IPR036188">
    <property type="entry name" value="FAD/NAD-bd_sf"/>
</dbReference>
<dbReference type="InterPro" id="IPR050281">
    <property type="entry name" value="Flavin_monoamine_oxidase"/>
</dbReference>
<dbReference type="InterPro" id="IPR009057">
    <property type="entry name" value="Homeodomain-like_sf"/>
</dbReference>
<dbReference type="InterPro" id="IPR007526">
    <property type="entry name" value="SWIRM"/>
</dbReference>
<dbReference type="InterPro" id="IPR036388">
    <property type="entry name" value="WH-like_DNA-bd_sf"/>
</dbReference>
<dbReference type="PANTHER" id="PTHR10742">
    <property type="entry name" value="FLAVIN MONOAMINE OXIDASE"/>
    <property type="match status" value="1"/>
</dbReference>
<dbReference type="PANTHER" id="PTHR10742:SF381">
    <property type="entry name" value="LYSINE-SPECIFIC HISTONE DEMETHYLASE 1 HOMOLOG 1"/>
    <property type="match status" value="1"/>
</dbReference>
<dbReference type="Pfam" id="PF01593">
    <property type="entry name" value="Amino_oxidase"/>
    <property type="match status" value="1"/>
</dbReference>
<dbReference type="Pfam" id="PF04433">
    <property type="entry name" value="SWIRM"/>
    <property type="match status" value="1"/>
</dbReference>
<dbReference type="SUPFAM" id="SSF54373">
    <property type="entry name" value="FAD-linked reductases, C-terminal domain"/>
    <property type="match status" value="1"/>
</dbReference>
<dbReference type="SUPFAM" id="SSF51905">
    <property type="entry name" value="FAD/NAD(P)-binding domain"/>
    <property type="match status" value="1"/>
</dbReference>
<dbReference type="SUPFAM" id="SSF46689">
    <property type="entry name" value="Homeodomain-like"/>
    <property type="match status" value="1"/>
</dbReference>
<dbReference type="PROSITE" id="PS50934">
    <property type="entry name" value="SWIRM"/>
    <property type="match status" value="1"/>
</dbReference>
<sequence length="849" mass="90748">MEEGSEAQPPLQPEAVSAEASEPPPPVPMDQDEGQAAAAEAMEGEAEGAAAAAGTIEGEAGYAAADADPMEDEAADEAGAAEPMEDDPPTSSAPSATAAVDDSTIARKRRRRKKQFPGMIPTAGVRVLRAAASAPSAAHLNGVPRRRGRPPTSSSLRLARELDAEALIALAAGFPADSLSEDEVAAAVLPRIGGVDQTNYLVVRNHVLALWRSNPLSPVASNAALASIRAEHAHLVAAAHSFLSDHAYINFGLAPSVISLPPCPPPSLPPPSVLIVGAGFAGLAAARHLMSLGFKVAIVEGRLRPGGRVFTKSMRSTAAEYPDIAAAADLGGSVLTGINGNPLGVIARQLGFPLHKVRDKCPLYLPDGRPVDPDMDARVEAAFNQLLDKVCQLRQVVADSIPHGVDVSLGMALEAFRAAHGVAAEREERMLLDWHLANLEYANAAPLVDLSMAFWDQDDPYEMGGDHCFIPGGNSRFVRALADGIPIFYGQNVRRIQYGCDGAMVYTDKQTFRGDMVLCTVPLGVLKKGNIQFVPELPAQKREAIERLGFGLLNKVVLLFPYDFWDGRIDTFGHLTEDSGQRGEFFLFYSYSSVSGGPLLIALVAGESAIEFEKTSPAENVEKVLETLRKIFSPKGIEVPKPLQAICTRWGTDKFTYGSYSYVAIGSSGDDYDILAESVCDRVFFAGEATNRRYPATMHGALLSGYREAANIVRAARRRAKKVDSPKKMDVNNEVKYEVKVDNIDLDDLFRTPDAAFGGFSVLHDPSTSEPDSISLLRVGIGARKLGSGSLFLYGLIMRKNVANLAAMEGDEQRLSTLYRDFGTKLVGLDGLGDSGSSLISRIKAAARK</sequence>
<gene>
    <name type="ordered locus">Os02g0755200</name>
    <name type="ordered locus">LOC_Os02g51880</name>
    <name type="ORF">P0627E03.23</name>
</gene>
<protein>
    <recommendedName>
        <fullName>Lysine-specific histone demethylase 1 homolog 1</fullName>
        <ecNumber>1.-.-.-</ecNumber>
    </recommendedName>
    <alternativeName>
        <fullName>Flavin-containing amine oxidase domain-containing protein 1</fullName>
    </alternativeName>
    <alternativeName>
        <fullName>Protein LSD1-LIKE 1</fullName>
    </alternativeName>
</protein>
<accession>Q6Z690</accession>
<accession>A0A0N7KG44</accession>
<reference key="1">
    <citation type="journal article" date="2005" name="Nature">
        <title>The map-based sequence of the rice genome.</title>
        <authorList>
            <consortium name="International rice genome sequencing project (IRGSP)"/>
        </authorList>
    </citation>
    <scope>NUCLEOTIDE SEQUENCE [LARGE SCALE GENOMIC DNA]</scope>
    <source>
        <strain>cv. Nipponbare</strain>
    </source>
</reference>
<reference key="2">
    <citation type="journal article" date="2008" name="Nucleic Acids Res.">
        <title>The rice annotation project database (RAP-DB): 2008 update.</title>
        <authorList>
            <consortium name="The rice annotation project (RAP)"/>
        </authorList>
    </citation>
    <scope>GENOME REANNOTATION</scope>
    <source>
        <strain>cv. Nipponbare</strain>
    </source>
</reference>
<reference key="3">
    <citation type="journal article" date="2013" name="Rice">
        <title>Improvement of the Oryza sativa Nipponbare reference genome using next generation sequence and optical map data.</title>
        <authorList>
            <person name="Kawahara Y."/>
            <person name="de la Bastide M."/>
            <person name="Hamilton J.P."/>
            <person name="Kanamori H."/>
            <person name="McCombie W.R."/>
            <person name="Ouyang S."/>
            <person name="Schwartz D.C."/>
            <person name="Tanaka T."/>
            <person name="Wu J."/>
            <person name="Zhou S."/>
            <person name="Childs K.L."/>
            <person name="Davidson R.M."/>
            <person name="Lin H."/>
            <person name="Quesada-Ocampo L."/>
            <person name="Vaillancourt B."/>
            <person name="Sakai H."/>
            <person name="Lee S.S."/>
            <person name="Kim J."/>
            <person name="Numa H."/>
            <person name="Itoh T."/>
            <person name="Buell C.R."/>
            <person name="Matsumoto T."/>
        </authorList>
    </citation>
    <scope>GENOME REANNOTATION</scope>
    <source>
        <strain>cv. Nipponbare</strain>
    </source>
</reference>
<reference key="4">
    <citation type="journal article" date="2003" name="Science">
        <title>Collection, mapping, and annotation of over 28,000 cDNA clones from japonica rice.</title>
        <authorList>
            <consortium name="The rice full-length cDNA consortium"/>
        </authorList>
    </citation>
    <scope>NUCLEOTIDE SEQUENCE [LARGE SCALE MRNA]</scope>
    <source>
        <strain>cv. Nipponbare</strain>
    </source>
</reference>
<keyword id="KW-0156">Chromatin regulator</keyword>
<keyword id="KW-0274">FAD</keyword>
<keyword id="KW-0285">Flavoprotein</keyword>
<keyword id="KW-0560">Oxidoreductase</keyword>
<keyword id="KW-1185">Reference proteome</keyword>
<comment type="function">
    <text evidence="1">Probable histone demethylase.</text>
</comment>
<comment type="cofactor">
    <cofactor evidence="4">
        <name>FAD</name>
        <dbReference type="ChEBI" id="CHEBI:57692"/>
    </cofactor>
</comment>
<comment type="similarity">
    <text evidence="4">Belongs to the flavin monoamine oxidase family.</text>
</comment>
<evidence type="ECO:0000250" key="1"/>
<evidence type="ECO:0000255" key="2">
    <source>
        <dbReference type="PROSITE-ProRule" id="PRU00247"/>
    </source>
</evidence>
<evidence type="ECO:0000256" key="3">
    <source>
        <dbReference type="SAM" id="MobiDB-lite"/>
    </source>
</evidence>
<evidence type="ECO:0000305" key="4"/>
<proteinExistence type="evidence at transcript level"/>